<reference key="1">
    <citation type="journal article" date="2011" name="J. Bacteriol.">
        <title>Comparative genomics of 28 Salmonella enterica isolates: evidence for CRISPR-mediated adaptive sublineage evolution.</title>
        <authorList>
            <person name="Fricke W.F."/>
            <person name="Mammel M.K."/>
            <person name="McDermott P.F."/>
            <person name="Tartera C."/>
            <person name="White D.G."/>
            <person name="Leclerc J.E."/>
            <person name="Ravel J."/>
            <person name="Cebula T.A."/>
        </authorList>
    </citation>
    <scope>NUCLEOTIDE SEQUENCE [LARGE SCALE GENOMIC DNA]</scope>
    <source>
        <strain>SL254</strain>
    </source>
</reference>
<comment type="function">
    <text evidence="1">Part of a sulfur-relay system required for 2-thiolation of 5-methylaminomethyl-2-thiouridine (mnm(5)s(2)U) at tRNA wobble positions.</text>
</comment>
<comment type="subunit">
    <text evidence="1">Heterohexamer, formed by a dimer of trimers. The hexameric TusBCD complex contains 2 copies each of TusB, TusC and TusD. The TusBCD complex interacts with TusE.</text>
</comment>
<comment type="subcellular location">
    <subcellularLocation>
        <location evidence="1">Cytoplasm</location>
    </subcellularLocation>
</comment>
<comment type="similarity">
    <text evidence="1">Belongs to the DsrH/TusB family.</text>
</comment>
<keyword id="KW-0963">Cytoplasm</keyword>
<keyword id="KW-0819">tRNA processing</keyword>
<sequence>MLHTLPHCASSVDFPALLRLLKEGDALLLLQDGVTVAIEGNRFLESLRDAPITVYALKEDIDARGLGGQISDSVVRVDYTEFVRLTVKYANQMAW</sequence>
<evidence type="ECO:0000255" key="1">
    <source>
        <dbReference type="HAMAP-Rule" id="MF_01564"/>
    </source>
</evidence>
<dbReference type="EMBL" id="CP001113">
    <property type="protein sequence ID" value="ACF65446.1"/>
    <property type="molecule type" value="Genomic_DNA"/>
</dbReference>
<dbReference type="RefSeq" id="WP_000903400.1">
    <property type="nucleotide sequence ID" value="NZ_CCMR01000004.1"/>
</dbReference>
<dbReference type="SMR" id="B4SUU9"/>
<dbReference type="KEGG" id="see:SNSL254_A3719"/>
<dbReference type="HOGENOM" id="CLU_166087_2_1_6"/>
<dbReference type="Proteomes" id="UP000008824">
    <property type="component" value="Chromosome"/>
</dbReference>
<dbReference type="GO" id="GO:1990228">
    <property type="term" value="C:sulfurtransferase complex"/>
    <property type="evidence" value="ECO:0007669"/>
    <property type="project" value="TreeGrafter"/>
</dbReference>
<dbReference type="GO" id="GO:0002143">
    <property type="term" value="P:tRNA wobble position uridine thiolation"/>
    <property type="evidence" value="ECO:0007669"/>
    <property type="project" value="InterPro"/>
</dbReference>
<dbReference type="FunFam" id="3.40.1260.10:FF:000002">
    <property type="entry name" value="Sulfurtransferase TusB"/>
    <property type="match status" value="1"/>
</dbReference>
<dbReference type="Gene3D" id="3.40.1260.10">
    <property type="entry name" value="DsrEFH-like"/>
    <property type="match status" value="1"/>
</dbReference>
<dbReference type="HAMAP" id="MF_01564">
    <property type="entry name" value="Thiourid_synth_B"/>
    <property type="match status" value="1"/>
</dbReference>
<dbReference type="InterPro" id="IPR027396">
    <property type="entry name" value="DsrEFH-like"/>
</dbReference>
<dbReference type="InterPro" id="IPR023526">
    <property type="entry name" value="Sulphur_relay_TusB"/>
</dbReference>
<dbReference type="InterPro" id="IPR007215">
    <property type="entry name" value="Sulphur_relay_TusB/DsrH"/>
</dbReference>
<dbReference type="NCBIfam" id="NF010035">
    <property type="entry name" value="PRK13510.1"/>
    <property type="match status" value="1"/>
</dbReference>
<dbReference type="NCBIfam" id="TIGR03011">
    <property type="entry name" value="sulf_tusB_dsrH"/>
    <property type="match status" value="1"/>
</dbReference>
<dbReference type="PANTHER" id="PTHR37526">
    <property type="entry name" value="PROTEIN TUSB"/>
    <property type="match status" value="1"/>
</dbReference>
<dbReference type="PANTHER" id="PTHR37526:SF1">
    <property type="entry name" value="PROTEIN TUSB"/>
    <property type="match status" value="1"/>
</dbReference>
<dbReference type="Pfam" id="PF04077">
    <property type="entry name" value="DsrH"/>
    <property type="match status" value="1"/>
</dbReference>
<dbReference type="SUPFAM" id="SSF75169">
    <property type="entry name" value="DsrEFH-like"/>
    <property type="match status" value="1"/>
</dbReference>
<gene>
    <name evidence="1" type="primary">tusB</name>
    <name type="ordered locus">SNSL254_A3719</name>
</gene>
<proteinExistence type="inferred from homology"/>
<protein>
    <recommendedName>
        <fullName evidence="1">Protein TusB</fullName>
    </recommendedName>
    <alternativeName>
        <fullName evidence="1">tRNA 2-thiouridine synthesizing protein B</fullName>
    </alternativeName>
</protein>
<accession>B4SUU9</accession>
<name>TUSB_SALNS</name>
<organism>
    <name type="scientific">Salmonella newport (strain SL254)</name>
    <dbReference type="NCBI Taxonomy" id="423368"/>
    <lineage>
        <taxon>Bacteria</taxon>
        <taxon>Pseudomonadati</taxon>
        <taxon>Pseudomonadota</taxon>
        <taxon>Gammaproteobacteria</taxon>
        <taxon>Enterobacterales</taxon>
        <taxon>Enterobacteriaceae</taxon>
        <taxon>Salmonella</taxon>
    </lineage>
</organism>
<feature type="chain" id="PRO_1000147191" description="Protein TusB">
    <location>
        <begin position="1"/>
        <end position="95"/>
    </location>
</feature>